<protein>
    <recommendedName>
        <fullName evidence="1">Translational regulator CsrA</fullName>
    </recommendedName>
    <alternativeName>
        <fullName evidence="1">Carbon storage regulator</fullName>
    </alternativeName>
</protein>
<proteinExistence type="inferred from homology"/>
<sequence>MLILTRRVGETLMIGDEVTVTVLGVKGNQVRIGVNAPKEVSVHREEIYQRIQAEKSQQSSY</sequence>
<comment type="function">
    <text evidence="1">A key translational regulator that binds mRNA to regulate translation initiation and/or mRNA stability. Mediates global changes in gene expression, shifting from rapid growth to stress survival by linking envelope stress, the stringent response and the catabolite repression systems. Usually binds in the 5'-UTR; binding at or near the Shine-Dalgarno sequence prevents ribosome-binding, repressing translation, binding elsewhere in the 5'-UTR can activate translation and/or stabilize the mRNA. Its function is antagonized by small RNA(s).</text>
</comment>
<comment type="subunit">
    <text evidence="1">Homodimer; the beta-strands of each monomer intercalate to form a hydrophobic core, while the alpha-helices form wings that extend away from the core.</text>
</comment>
<comment type="subcellular location">
    <subcellularLocation>
        <location evidence="1">Cytoplasm</location>
    </subcellularLocation>
</comment>
<comment type="similarity">
    <text evidence="1">Belongs to the CsrA/RsmA family.</text>
</comment>
<reference key="1">
    <citation type="journal article" date="2008" name="Genome Res.">
        <title>Comparative genome analysis of Salmonella enteritidis PT4 and Salmonella gallinarum 287/91 provides insights into evolutionary and host adaptation pathways.</title>
        <authorList>
            <person name="Thomson N.R."/>
            <person name="Clayton D.J."/>
            <person name="Windhorst D."/>
            <person name="Vernikos G."/>
            <person name="Davidson S."/>
            <person name="Churcher C."/>
            <person name="Quail M.A."/>
            <person name="Stevens M."/>
            <person name="Jones M.A."/>
            <person name="Watson M."/>
            <person name="Barron A."/>
            <person name="Layton A."/>
            <person name="Pickard D."/>
            <person name="Kingsley R.A."/>
            <person name="Bignell A."/>
            <person name="Clark L."/>
            <person name="Harris B."/>
            <person name="Ormond D."/>
            <person name="Abdellah Z."/>
            <person name="Brooks K."/>
            <person name="Cherevach I."/>
            <person name="Chillingworth T."/>
            <person name="Woodward J."/>
            <person name="Norberczak H."/>
            <person name="Lord A."/>
            <person name="Arrowsmith C."/>
            <person name="Jagels K."/>
            <person name="Moule S."/>
            <person name="Mungall K."/>
            <person name="Saunders M."/>
            <person name="Whitehead S."/>
            <person name="Chabalgoity J.A."/>
            <person name="Maskell D."/>
            <person name="Humphreys T."/>
            <person name="Roberts M."/>
            <person name="Barrow P.A."/>
            <person name="Dougan G."/>
            <person name="Parkhill J."/>
        </authorList>
    </citation>
    <scope>NUCLEOTIDE SEQUENCE [LARGE SCALE GENOMIC DNA]</scope>
    <source>
        <strain>287/91 / NCTC 13346</strain>
    </source>
</reference>
<organism>
    <name type="scientific">Salmonella gallinarum (strain 287/91 / NCTC 13346)</name>
    <dbReference type="NCBI Taxonomy" id="550538"/>
    <lineage>
        <taxon>Bacteria</taxon>
        <taxon>Pseudomonadati</taxon>
        <taxon>Pseudomonadota</taxon>
        <taxon>Gammaproteobacteria</taxon>
        <taxon>Enterobacterales</taxon>
        <taxon>Enterobacteriaceae</taxon>
        <taxon>Salmonella</taxon>
    </lineage>
</organism>
<feature type="chain" id="PRO_1000097504" description="Translational regulator CsrA">
    <location>
        <begin position="1"/>
        <end position="61"/>
    </location>
</feature>
<dbReference type="EMBL" id="AM933173">
    <property type="protein sequence ID" value="CAR38538.1"/>
    <property type="molecule type" value="Genomic_DNA"/>
</dbReference>
<dbReference type="RefSeq" id="WP_000906486.1">
    <property type="nucleotide sequence ID" value="NC_011274.1"/>
</dbReference>
<dbReference type="SMR" id="B5RDF1"/>
<dbReference type="GeneID" id="98389839"/>
<dbReference type="KEGG" id="seg:SG2729"/>
<dbReference type="HOGENOM" id="CLU_164837_2_1_6"/>
<dbReference type="Proteomes" id="UP000008321">
    <property type="component" value="Chromosome"/>
</dbReference>
<dbReference type="GO" id="GO:0005829">
    <property type="term" value="C:cytosol"/>
    <property type="evidence" value="ECO:0007669"/>
    <property type="project" value="TreeGrafter"/>
</dbReference>
<dbReference type="GO" id="GO:0048027">
    <property type="term" value="F:mRNA 5'-UTR binding"/>
    <property type="evidence" value="ECO:0007669"/>
    <property type="project" value="UniProtKB-UniRule"/>
</dbReference>
<dbReference type="GO" id="GO:0006402">
    <property type="term" value="P:mRNA catabolic process"/>
    <property type="evidence" value="ECO:0007669"/>
    <property type="project" value="InterPro"/>
</dbReference>
<dbReference type="GO" id="GO:0045947">
    <property type="term" value="P:negative regulation of translational initiation"/>
    <property type="evidence" value="ECO:0007669"/>
    <property type="project" value="UniProtKB-UniRule"/>
</dbReference>
<dbReference type="GO" id="GO:0045948">
    <property type="term" value="P:positive regulation of translational initiation"/>
    <property type="evidence" value="ECO:0007669"/>
    <property type="project" value="UniProtKB-UniRule"/>
</dbReference>
<dbReference type="GO" id="GO:0006109">
    <property type="term" value="P:regulation of carbohydrate metabolic process"/>
    <property type="evidence" value="ECO:0007669"/>
    <property type="project" value="UniProtKB-UniRule"/>
</dbReference>
<dbReference type="FunFam" id="2.60.40.4380:FF:000001">
    <property type="entry name" value="Translational regulator CsrA"/>
    <property type="match status" value="1"/>
</dbReference>
<dbReference type="Gene3D" id="2.60.40.4380">
    <property type="entry name" value="Translational regulator CsrA"/>
    <property type="match status" value="1"/>
</dbReference>
<dbReference type="HAMAP" id="MF_00167">
    <property type="entry name" value="CsrA"/>
    <property type="match status" value="1"/>
</dbReference>
<dbReference type="InterPro" id="IPR003751">
    <property type="entry name" value="CsrA"/>
</dbReference>
<dbReference type="InterPro" id="IPR036107">
    <property type="entry name" value="CsrA_sf"/>
</dbReference>
<dbReference type="NCBIfam" id="TIGR00202">
    <property type="entry name" value="csrA"/>
    <property type="match status" value="1"/>
</dbReference>
<dbReference type="NCBIfam" id="NF002469">
    <property type="entry name" value="PRK01712.1"/>
    <property type="match status" value="1"/>
</dbReference>
<dbReference type="PANTHER" id="PTHR34984">
    <property type="entry name" value="CARBON STORAGE REGULATOR"/>
    <property type="match status" value="1"/>
</dbReference>
<dbReference type="PANTHER" id="PTHR34984:SF1">
    <property type="entry name" value="CARBON STORAGE REGULATOR"/>
    <property type="match status" value="1"/>
</dbReference>
<dbReference type="Pfam" id="PF02599">
    <property type="entry name" value="CsrA"/>
    <property type="match status" value="1"/>
</dbReference>
<dbReference type="SUPFAM" id="SSF117130">
    <property type="entry name" value="CsrA-like"/>
    <property type="match status" value="1"/>
</dbReference>
<accession>B5RDF1</accession>
<name>CSRA_SALG2</name>
<keyword id="KW-0010">Activator</keyword>
<keyword id="KW-0963">Cytoplasm</keyword>
<keyword id="KW-0678">Repressor</keyword>
<keyword id="KW-0694">RNA-binding</keyword>
<keyword id="KW-0810">Translation regulation</keyword>
<gene>
    <name evidence="1" type="primary">csrA</name>
    <name type="ordered locus">SG2729</name>
</gene>
<evidence type="ECO:0000255" key="1">
    <source>
        <dbReference type="HAMAP-Rule" id="MF_00167"/>
    </source>
</evidence>